<protein>
    <recommendedName>
        <fullName evidence="2">Uncharacterized protein IMPP5</fullName>
    </recommendedName>
</protein>
<feature type="chain" id="PRO_0000371466" description="Uncharacterized protein IMPP5">
    <location>
        <begin position="1" status="less than"/>
        <end position="9" status="greater than"/>
    </location>
</feature>
<feature type="unsure residue" description="L or I" evidence="1">
    <location>
        <position position="1"/>
    </location>
</feature>
<feature type="unsure residue" description="L or I" evidence="1">
    <location>
        <position position="4"/>
    </location>
</feature>
<feature type="non-terminal residue" evidence="2">
    <location>
        <position position="1"/>
    </location>
</feature>
<feature type="non-terminal residue" evidence="2">
    <location>
        <position position="9"/>
    </location>
</feature>
<sequence>LGSLDEYAR</sequence>
<accession>P85386</accession>
<proteinExistence type="evidence at protein level"/>
<name>IMP05_NAUMA</name>
<comment type="tissue specificity">
    <text evidence="1">Nacreous layer of shell.</text>
</comment>
<evidence type="ECO:0000269" key="1">
    <source>
    </source>
</evidence>
<evidence type="ECO:0000303" key="2">
    <source>
    </source>
</evidence>
<keyword id="KW-0903">Direct protein sequencing</keyword>
<reference key="1">
    <citation type="journal article" date="2009" name="ChemBioChem">
        <title>Evolution of nacre: biochemistry and 'shellomics' of the shell organic matrix of the cephalopod Nautilus macromphalus.</title>
        <authorList>
            <person name="Marie B."/>
            <person name="Marin F."/>
            <person name="Marie A."/>
            <person name="Bedouet L."/>
            <person name="Dubost L."/>
            <person name="Alcaraz G."/>
            <person name="Milet C."/>
            <person name="Luquet G."/>
        </authorList>
    </citation>
    <scope>PROTEIN SEQUENCE</scope>
    <scope>TISSUE SPECIFICITY</scope>
    <source>
        <tissue>Shell</tissue>
    </source>
</reference>
<organism>
    <name type="scientific">Nautilus macromphalus</name>
    <name type="common">Bellybutton nautilus</name>
    <dbReference type="NCBI Taxonomy" id="34576"/>
    <lineage>
        <taxon>Eukaryota</taxon>
        <taxon>Metazoa</taxon>
        <taxon>Spiralia</taxon>
        <taxon>Lophotrochozoa</taxon>
        <taxon>Mollusca</taxon>
        <taxon>Cephalopoda</taxon>
        <taxon>Nautiloidea</taxon>
        <taxon>Nautilida</taxon>
        <taxon>Nautilidae</taxon>
        <taxon>Nautilus</taxon>
    </lineage>
</organism>